<organism>
    <name type="scientific">Bacillus subtilis (strain 168)</name>
    <dbReference type="NCBI Taxonomy" id="224308"/>
    <lineage>
        <taxon>Bacteria</taxon>
        <taxon>Bacillati</taxon>
        <taxon>Bacillota</taxon>
        <taxon>Bacilli</taxon>
        <taxon>Bacillales</taxon>
        <taxon>Bacillaceae</taxon>
        <taxon>Bacillus</taxon>
    </lineage>
</organism>
<protein>
    <recommendedName>
        <fullName>UPF0718 protein YcgR</fullName>
    </recommendedName>
</protein>
<evidence type="ECO:0000255" key="1"/>
<evidence type="ECO:0000305" key="2"/>
<sequence>MTAQSSFLQLNSIFISILIEAIPFILIGVILSGIIQMFVSEEMIARIMPKNRFLAVLFGALAGVLFPACECGIIPITRRLLLKGVPLHAGVAFMLTAPIINPIVLFSTYIAFGNRWSVVFYRGGLALAVSLIIGVILSYQFKDNQLLKPDEPGHHHHHHGTLLQKLGGTLRHAIDEFFSVGKYLIIGAFIAAAMQTYVKTSTLLAIGQNDVSSSLVMMGLAFVLSLCSEVDAFIASSFSSTFSLGSLIAFLVFGAMVDIKNLLMMLAAFKKRFVFLLITYIVVIVLAGSLLVKG</sequence>
<proteinExistence type="inferred from homology"/>
<dbReference type="EMBL" id="D50453">
    <property type="protein sequence ID" value="BAA08959.1"/>
    <property type="molecule type" value="Genomic_DNA"/>
</dbReference>
<dbReference type="EMBL" id="AL009126">
    <property type="protein sequence ID" value="CAB12119.1"/>
    <property type="molecule type" value="Genomic_DNA"/>
</dbReference>
<dbReference type="PIR" id="E69759">
    <property type="entry name" value="E69759"/>
</dbReference>
<dbReference type="RefSeq" id="NP_388207.1">
    <property type="nucleotide sequence ID" value="NC_000964.3"/>
</dbReference>
<dbReference type="RefSeq" id="WP_010886400.1">
    <property type="nucleotide sequence ID" value="NZ_OZ025638.1"/>
</dbReference>
<dbReference type="SMR" id="P94395"/>
<dbReference type="FunCoup" id="P94395">
    <property type="interactions" value="351"/>
</dbReference>
<dbReference type="STRING" id="224308.BSU03250"/>
<dbReference type="PaxDb" id="224308-BSU03250"/>
<dbReference type="EnsemblBacteria" id="CAB12119">
    <property type="protein sequence ID" value="CAB12119"/>
    <property type="gene ID" value="BSU_03250"/>
</dbReference>
<dbReference type="GeneID" id="938335"/>
<dbReference type="KEGG" id="bsu:BSU03250"/>
<dbReference type="PATRIC" id="fig|224308.43.peg.333"/>
<dbReference type="eggNOG" id="COG0701">
    <property type="taxonomic scope" value="Bacteria"/>
</dbReference>
<dbReference type="InParanoid" id="P94395"/>
<dbReference type="OrthoDB" id="9810876at2"/>
<dbReference type="PhylomeDB" id="P94395"/>
<dbReference type="BioCyc" id="BSUB:BSU03250-MONOMER"/>
<dbReference type="Proteomes" id="UP000001570">
    <property type="component" value="Chromosome"/>
</dbReference>
<dbReference type="GO" id="GO:0005886">
    <property type="term" value="C:plasma membrane"/>
    <property type="evidence" value="ECO:0007669"/>
    <property type="project" value="UniProtKB-SubCell"/>
</dbReference>
<dbReference type="InterPro" id="IPR005524">
    <property type="entry name" value="DUF318"/>
</dbReference>
<dbReference type="InterPro" id="IPR052923">
    <property type="entry name" value="UPF0718"/>
</dbReference>
<dbReference type="PANTHER" id="PTHR34184">
    <property type="entry name" value="UPF0718 PROTEIN YCGR"/>
    <property type="match status" value="1"/>
</dbReference>
<dbReference type="PANTHER" id="PTHR34184:SF4">
    <property type="entry name" value="UPF0718 PROTEIN YCGR"/>
    <property type="match status" value="1"/>
</dbReference>
<dbReference type="Pfam" id="PF03773">
    <property type="entry name" value="ArsP_1"/>
    <property type="match status" value="1"/>
</dbReference>
<feature type="chain" id="PRO_0000360662" description="UPF0718 protein YcgR">
    <location>
        <begin position="1"/>
        <end position="294"/>
    </location>
</feature>
<feature type="transmembrane region" description="Helical" evidence="1">
    <location>
        <begin position="15"/>
        <end position="35"/>
    </location>
</feature>
<feature type="transmembrane region" description="Helical" evidence="1">
    <location>
        <begin position="54"/>
        <end position="74"/>
    </location>
</feature>
<feature type="transmembrane region" description="Helical" evidence="1">
    <location>
        <begin position="92"/>
        <end position="112"/>
    </location>
</feature>
<feature type="transmembrane region" description="Helical" evidence="1">
    <location>
        <begin position="117"/>
        <end position="137"/>
    </location>
</feature>
<feature type="transmembrane region" description="Helical" evidence="1">
    <location>
        <begin position="174"/>
        <end position="194"/>
    </location>
</feature>
<feature type="transmembrane region" description="Helical" evidence="1">
    <location>
        <begin position="215"/>
        <end position="235"/>
    </location>
</feature>
<feature type="transmembrane region" description="Helical" evidence="1">
    <location>
        <begin position="247"/>
        <end position="267"/>
    </location>
</feature>
<feature type="transmembrane region" description="Helical" evidence="1">
    <location>
        <begin position="273"/>
        <end position="293"/>
    </location>
</feature>
<gene>
    <name type="primary">ycgR</name>
    <name type="ordered locus">BSU03250</name>
</gene>
<name>YCGR_BACSU</name>
<reference key="1">
    <citation type="journal article" date="1996" name="Microbiology">
        <title>The 25 degrees-36 degrees region of the Bacillus subtilis chromosome: determination of the sequence of a 146 kb segment and identification of 113 genes.</title>
        <authorList>
            <person name="Yamane K."/>
            <person name="Kumano M."/>
            <person name="Kurita K."/>
        </authorList>
    </citation>
    <scope>NUCLEOTIDE SEQUENCE [GENOMIC DNA]</scope>
    <source>
        <strain>168</strain>
    </source>
</reference>
<reference key="2">
    <citation type="journal article" date="1997" name="Nature">
        <title>The complete genome sequence of the Gram-positive bacterium Bacillus subtilis.</title>
        <authorList>
            <person name="Kunst F."/>
            <person name="Ogasawara N."/>
            <person name="Moszer I."/>
            <person name="Albertini A.M."/>
            <person name="Alloni G."/>
            <person name="Azevedo V."/>
            <person name="Bertero M.G."/>
            <person name="Bessieres P."/>
            <person name="Bolotin A."/>
            <person name="Borchert S."/>
            <person name="Borriss R."/>
            <person name="Boursier L."/>
            <person name="Brans A."/>
            <person name="Braun M."/>
            <person name="Brignell S.C."/>
            <person name="Bron S."/>
            <person name="Brouillet S."/>
            <person name="Bruschi C.V."/>
            <person name="Caldwell B."/>
            <person name="Capuano V."/>
            <person name="Carter N.M."/>
            <person name="Choi S.-K."/>
            <person name="Codani J.-J."/>
            <person name="Connerton I.F."/>
            <person name="Cummings N.J."/>
            <person name="Daniel R.A."/>
            <person name="Denizot F."/>
            <person name="Devine K.M."/>
            <person name="Duesterhoeft A."/>
            <person name="Ehrlich S.D."/>
            <person name="Emmerson P.T."/>
            <person name="Entian K.-D."/>
            <person name="Errington J."/>
            <person name="Fabret C."/>
            <person name="Ferrari E."/>
            <person name="Foulger D."/>
            <person name="Fritz C."/>
            <person name="Fujita M."/>
            <person name="Fujita Y."/>
            <person name="Fuma S."/>
            <person name="Galizzi A."/>
            <person name="Galleron N."/>
            <person name="Ghim S.-Y."/>
            <person name="Glaser P."/>
            <person name="Goffeau A."/>
            <person name="Golightly E.J."/>
            <person name="Grandi G."/>
            <person name="Guiseppi G."/>
            <person name="Guy B.J."/>
            <person name="Haga K."/>
            <person name="Haiech J."/>
            <person name="Harwood C.R."/>
            <person name="Henaut A."/>
            <person name="Hilbert H."/>
            <person name="Holsappel S."/>
            <person name="Hosono S."/>
            <person name="Hullo M.-F."/>
            <person name="Itaya M."/>
            <person name="Jones L.-M."/>
            <person name="Joris B."/>
            <person name="Karamata D."/>
            <person name="Kasahara Y."/>
            <person name="Klaerr-Blanchard M."/>
            <person name="Klein C."/>
            <person name="Kobayashi Y."/>
            <person name="Koetter P."/>
            <person name="Koningstein G."/>
            <person name="Krogh S."/>
            <person name="Kumano M."/>
            <person name="Kurita K."/>
            <person name="Lapidus A."/>
            <person name="Lardinois S."/>
            <person name="Lauber J."/>
            <person name="Lazarevic V."/>
            <person name="Lee S.-M."/>
            <person name="Levine A."/>
            <person name="Liu H."/>
            <person name="Masuda S."/>
            <person name="Mauel C."/>
            <person name="Medigue C."/>
            <person name="Medina N."/>
            <person name="Mellado R.P."/>
            <person name="Mizuno M."/>
            <person name="Moestl D."/>
            <person name="Nakai S."/>
            <person name="Noback M."/>
            <person name="Noone D."/>
            <person name="O'Reilly M."/>
            <person name="Ogawa K."/>
            <person name="Ogiwara A."/>
            <person name="Oudega B."/>
            <person name="Park S.-H."/>
            <person name="Parro V."/>
            <person name="Pohl T.M."/>
            <person name="Portetelle D."/>
            <person name="Porwollik S."/>
            <person name="Prescott A.M."/>
            <person name="Presecan E."/>
            <person name="Pujic P."/>
            <person name="Purnelle B."/>
            <person name="Rapoport G."/>
            <person name="Rey M."/>
            <person name="Reynolds S."/>
            <person name="Rieger M."/>
            <person name="Rivolta C."/>
            <person name="Rocha E."/>
            <person name="Roche B."/>
            <person name="Rose M."/>
            <person name="Sadaie Y."/>
            <person name="Sato T."/>
            <person name="Scanlan E."/>
            <person name="Schleich S."/>
            <person name="Schroeter R."/>
            <person name="Scoffone F."/>
            <person name="Sekiguchi J."/>
            <person name="Sekowska A."/>
            <person name="Seror S.J."/>
            <person name="Serror P."/>
            <person name="Shin B.-S."/>
            <person name="Soldo B."/>
            <person name="Sorokin A."/>
            <person name="Tacconi E."/>
            <person name="Takagi T."/>
            <person name="Takahashi H."/>
            <person name="Takemaru K."/>
            <person name="Takeuchi M."/>
            <person name="Tamakoshi A."/>
            <person name="Tanaka T."/>
            <person name="Terpstra P."/>
            <person name="Tognoni A."/>
            <person name="Tosato V."/>
            <person name="Uchiyama S."/>
            <person name="Vandenbol M."/>
            <person name="Vannier F."/>
            <person name="Vassarotti A."/>
            <person name="Viari A."/>
            <person name="Wambutt R."/>
            <person name="Wedler E."/>
            <person name="Wedler H."/>
            <person name="Weitzenegger T."/>
            <person name="Winters P."/>
            <person name="Wipat A."/>
            <person name="Yamamoto H."/>
            <person name="Yamane K."/>
            <person name="Yasumoto K."/>
            <person name="Yata K."/>
            <person name="Yoshida K."/>
            <person name="Yoshikawa H.-F."/>
            <person name="Zumstein E."/>
            <person name="Yoshikawa H."/>
            <person name="Danchin A."/>
        </authorList>
    </citation>
    <scope>NUCLEOTIDE SEQUENCE [LARGE SCALE GENOMIC DNA]</scope>
    <source>
        <strain>168</strain>
    </source>
</reference>
<comment type="subcellular location">
    <subcellularLocation>
        <location evidence="2">Cell membrane</location>
        <topology evidence="2">Multi-pass membrane protein</topology>
    </subcellularLocation>
</comment>
<comment type="similarity">
    <text evidence="2">Belongs to the UPF0718 family.</text>
</comment>
<accession>P94395</accession>
<accession>Q797Q2</accession>
<keyword id="KW-1003">Cell membrane</keyword>
<keyword id="KW-0472">Membrane</keyword>
<keyword id="KW-1185">Reference proteome</keyword>
<keyword id="KW-0812">Transmembrane</keyword>
<keyword id="KW-1133">Transmembrane helix</keyword>